<protein>
    <recommendedName>
        <fullName evidence="1">Multifunctional CCA protein</fullName>
    </recommendedName>
    <domain>
        <recommendedName>
            <fullName evidence="1">CCA-adding enzyme</fullName>
            <ecNumber evidence="1">2.7.7.72</ecNumber>
        </recommendedName>
        <alternativeName>
            <fullName evidence="1">CCA tRNA nucleotidyltransferase</fullName>
        </alternativeName>
        <alternativeName>
            <fullName evidence="1">tRNA CCA-pyrophosphorylase</fullName>
        </alternativeName>
        <alternativeName>
            <fullName evidence="1">tRNA adenylyl-/cytidylyl-transferase</fullName>
        </alternativeName>
        <alternativeName>
            <fullName evidence="1">tRNA nucleotidyltransferase</fullName>
        </alternativeName>
        <alternativeName>
            <fullName evidence="1">tRNA-NT</fullName>
        </alternativeName>
    </domain>
    <domain>
        <recommendedName>
            <fullName evidence="1">2'-nucleotidase</fullName>
            <ecNumber evidence="1">3.1.3.-</ecNumber>
        </recommendedName>
    </domain>
    <domain>
        <recommendedName>
            <fullName evidence="1">2',3'-cyclic phosphodiesterase</fullName>
            <ecNumber evidence="1">3.1.4.-</ecNumber>
        </recommendedName>
    </domain>
    <domain>
        <recommendedName>
            <fullName evidence="1">Phosphatase</fullName>
            <ecNumber evidence="1">3.1.3.-</ecNumber>
        </recommendedName>
    </domain>
</protein>
<accession>B7GZN3</accession>
<comment type="function">
    <text evidence="1">Catalyzes the addition and repair of the essential 3'-terminal CCA sequence in tRNAs without using a nucleic acid template. Adds these three nucleotides in the order of C, C, and A to the tRNA nucleotide-73, using CTP and ATP as substrates and producing inorganic pyrophosphate. tRNA 3'-terminal CCA addition is required both for tRNA processing and repair. Also involved in tRNA surveillance by mediating tandem CCA addition to generate a CCACCA at the 3' terminus of unstable tRNAs. While stable tRNAs receive only 3'-terminal CCA, unstable tRNAs are marked with CCACCA and rapidly degraded.</text>
</comment>
<comment type="catalytic activity">
    <reaction evidence="1">
        <text>a tRNA precursor + 2 CTP + ATP = a tRNA with a 3' CCA end + 3 diphosphate</text>
        <dbReference type="Rhea" id="RHEA:14433"/>
        <dbReference type="Rhea" id="RHEA-COMP:10465"/>
        <dbReference type="Rhea" id="RHEA-COMP:10468"/>
        <dbReference type="ChEBI" id="CHEBI:30616"/>
        <dbReference type="ChEBI" id="CHEBI:33019"/>
        <dbReference type="ChEBI" id="CHEBI:37563"/>
        <dbReference type="ChEBI" id="CHEBI:74896"/>
        <dbReference type="ChEBI" id="CHEBI:83071"/>
        <dbReference type="EC" id="2.7.7.72"/>
    </reaction>
</comment>
<comment type="catalytic activity">
    <reaction evidence="1">
        <text>a tRNA with a 3' CCA end + 2 CTP + ATP = a tRNA with a 3' CCACCA end + 3 diphosphate</text>
        <dbReference type="Rhea" id="RHEA:76235"/>
        <dbReference type="Rhea" id="RHEA-COMP:10468"/>
        <dbReference type="Rhea" id="RHEA-COMP:18655"/>
        <dbReference type="ChEBI" id="CHEBI:30616"/>
        <dbReference type="ChEBI" id="CHEBI:33019"/>
        <dbReference type="ChEBI" id="CHEBI:37563"/>
        <dbReference type="ChEBI" id="CHEBI:83071"/>
        <dbReference type="ChEBI" id="CHEBI:195187"/>
    </reaction>
    <physiologicalReaction direction="left-to-right" evidence="1">
        <dbReference type="Rhea" id="RHEA:76236"/>
    </physiologicalReaction>
</comment>
<comment type="cofactor">
    <cofactor evidence="1">
        <name>Mg(2+)</name>
        <dbReference type="ChEBI" id="CHEBI:18420"/>
    </cofactor>
    <text evidence="1">Magnesium is required for nucleotidyltransferase activity.</text>
</comment>
<comment type="cofactor">
    <cofactor evidence="1">
        <name>Ni(2+)</name>
        <dbReference type="ChEBI" id="CHEBI:49786"/>
    </cofactor>
    <text evidence="1">Nickel for phosphatase activity.</text>
</comment>
<comment type="subunit">
    <text evidence="1">Monomer. Can also form homodimers and oligomers.</text>
</comment>
<comment type="domain">
    <text evidence="1">Comprises two domains: an N-terminal domain containing the nucleotidyltransferase activity and a C-terminal HD domain associated with both phosphodiesterase and phosphatase activities.</text>
</comment>
<comment type="miscellaneous">
    <text evidence="1">A single active site specifically recognizes both ATP and CTP and is responsible for their addition.</text>
</comment>
<comment type="similarity">
    <text evidence="1">Belongs to the tRNA nucleotidyltransferase/poly(A) polymerase family. Bacterial CCA-adding enzyme type 1 subfamily.</text>
</comment>
<feature type="chain" id="PRO_1000140015" description="Multifunctional CCA protein">
    <location>
        <begin position="1"/>
        <end position="412"/>
    </location>
</feature>
<feature type="domain" description="HD" evidence="1">
    <location>
        <begin position="228"/>
        <end position="329"/>
    </location>
</feature>
<feature type="binding site" evidence="1">
    <location>
        <position position="8"/>
    </location>
    <ligand>
        <name>ATP</name>
        <dbReference type="ChEBI" id="CHEBI:30616"/>
    </ligand>
</feature>
<feature type="binding site" evidence="1">
    <location>
        <position position="8"/>
    </location>
    <ligand>
        <name>CTP</name>
        <dbReference type="ChEBI" id="CHEBI:37563"/>
    </ligand>
</feature>
<feature type="binding site" evidence="1">
    <location>
        <position position="11"/>
    </location>
    <ligand>
        <name>ATP</name>
        <dbReference type="ChEBI" id="CHEBI:30616"/>
    </ligand>
</feature>
<feature type="binding site" evidence="1">
    <location>
        <position position="11"/>
    </location>
    <ligand>
        <name>CTP</name>
        <dbReference type="ChEBI" id="CHEBI:37563"/>
    </ligand>
</feature>
<feature type="binding site" evidence="1">
    <location>
        <position position="21"/>
    </location>
    <ligand>
        <name>Mg(2+)</name>
        <dbReference type="ChEBI" id="CHEBI:18420"/>
    </ligand>
</feature>
<feature type="binding site" evidence="1">
    <location>
        <position position="23"/>
    </location>
    <ligand>
        <name>Mg(2+)</name>
        <dbReference type="ChEBI" id="CHEBI:18420"/>
    </ligand>
</feature>
<feature type="binding site" evidence="1">
    <location>
        <position position="91"/>
    </location>
    <ligand>
        <name>ATP</name>
        <dbReference type="ChEBI" id="CHEBI:30616"/>
    </ligand>
</feature>
<feature type="binding site" evidence="1">
    <location>
        <position position="91"/>
    </location>
    <ligand>
        <name>CTP</name>
        <dbReference type="ChEBI" id="CHEBI:37563"/>
    </ligand>
</feature>
<feature type="binding site" evidence="1">
    <location>
        <position position="137"/>
    </location>
    <ligand>
        <name>ATP</name>
        <dbReference type="ChEBI" id="CHEBI:30616"/>
    </ligand>
</feature>
<feature type="binding site" evidence="1">
    <location>
        <position position="137"/>
    </location>
    <ligand>
        <name>CTP</name>
        <dbReference type="ChEBI" id="CHEBI:37563"/>
    </ligand>
</feature>
<feature type="binding site" evidence="1">
    <location>
        <position position="140"/>
    </location>
    <ligand>
        <name>ATP</name>
        <dbReference type="ChEBI" id="CHEBI:30616"/>
    </ligand>
</feature>
<feature type="binding site" evidence="1">
    <location>
        <position position="140"/>
    </location>
    <ligand>
        <name>CTP</name>
        <dbReference type="ChEBI" id="CHEBI:37563"/>
    </ligand>
</feature>
<keyword id="KW-0067">ATP-binding</keyword>
<keyword id="KW-0378">Hydrolase</keyword>
<keyword id="KW-0460">Magnesium</keyword>
<keyword id="KW-0479">Metal-binding</keyword>
<keyword id="KW-0511">Multifunctional enzyme</keyword>
<keyword id="KW-0533">Nickel</keyword>
<keyword id="KW-0547">Nucleotide-binding</keyword>
<keyword id="KW-0548">Nucleotidyltransferase</keyword>
<keyword id="KW-0692">RNA repair</keyword>
<keyword id="KW-0694">RNA-binding</keyword>
<keyword id="KW-0808">Transferase</keyword>
<keyword id="KW-0819">tRNA processing</keyword>
<dbReference type="EC" id="2.7.7.72" evidence="1"/>
<dbReference type="EC" id="3.1.3.-" evidence="1"/>
<dbReference type="EC" id="3.1.4.-" evidence="1"/>
<dbReference type="EMBL" id="CP001172">
    <property type="protein sequence ID" value="ACJ58721.1"/>
    <property type="molecule type" value="Genomic_DNA"/>
</dbReference>
<dbReference type="RefSeq" id="WP_001198539.1">
    <property type="nucleotide sequence ID" value="NZ_CP001172.1"/>
</dbReference>
<dbReference type="SMR" id="B7GZN3"/>
<dbReference type="HOGENOM" id="CLU_015961_1_1_6"/>
<dbReference type="Proteomes" id="UP000006924">
    <property type="component" value="Chromosome"/>
</dbReference>
<dbReference type="GO" id="GO:0005524">
    <property type="term" value="F:ATP binding"/>
    <property type="evidence" value="ECO:0007669"/>
    <property type="project" value="UniProtKB-UniRule"/>
</dbReference>
<dbReference type="GO" id="GO:0004810">
    <property type="term" value="F:CCA tRNA nucleotidyltransferase activity"/>
    <property type="evidence" value="ECO:0007669"/>
    <property type="project" value="UniProtKB-UniRule"/>
</dbReference>
<dbReference type="GO" id="GO:0004112">
    <property type="term" value="F:cyclic-nucleotide phosphodiesterase activity"/>
    <property type="evidence" value="ECO:0007669"/>
    <property type="project" value="UniProtKB-UniRule"/>
</dbReference>
<dbReference type="GO" id="GO:0000287">
    <property type="term" value="F:magnesium ion binding"/>
    <property type="evidence" value="ECO:0007669"/>
    <property type="project" value="UniProtKB-UniRule"/>
</dbReference>
<dbReference type="GO" id="GO:0016791">
    <property type="term" value="F:phosphatase activity"/>
    <property type="evidence" value="ECO:0007669"/>
    <property type="project" value="UniProtKB-UniRule"/>
</dbReference>
<dbReference type="GO" id="GO:0000049">
    <property type="term" value="F:tRNA binding"/>
    <property type="evidence" value="ECO:0007669"/>
    <property type="project" value="UniProtKB-UniRule"/>
</dbReference>
<dbReference type="GO" id="GO:0042245">
    <property type="term" value="P:RNA repair"/>
    <property type="evidence" value="ECO:0007669"/>
    <property type="project" value="UniProtKB-KW"/>
</dbReference>
<dbReference type="GO" id="GO:0001680">
    <property type="term" value="P:tRNA 3'-terminal CCA addition"/>
    <property type="evidence" value="ECO:0007669"/>
    <property type="project" value="UniProtKB-UniRule"/>
</dbReference>
<dbReference type="CDD" id="cd00077">
    <property type="entry name" value="HDc"/>
    <property type="match status" value="1"/>
</dbReference>
<dbReference type="CDD" id="cd05398">
    <property type="entry name" value="NT_ClassII-CCAase"/>
    <property type="match status" value="1"/>
</dbReference>
<dbReference type="Gene3D" id="3.30.460.10">
    <property type="entry name" value="Beta Polymerase, domain 2"/>
    <property type="match status" value="1"/>
</dbReference>
<dbReference type="Gene3D" id="1.10.3090.10">
    <property type="entry name" value="cca-adding enzyme, domain 2"/>
    <property type="match status" value="1"/>
</dbReference>
<dbReference type="HAMAP" id="MF_01261">
    <property type="entry name" value="CCA_bact_type1"/>
    <property type="match status" value="1"/>
</dbReference>
<dbReference type="HAMAP" id="MF_01262">
    <property type="entry name" value="CCA_bact_type2"/>
    <property type="match status" value="1"/>
</dbReference>
<dbReference type="InterPro" id="IPR012006">
    <property type="entry name" value="CCA_bact"/>
</dbReference>
<dbReference type="InterPro" id="IPR003607">
    <property type="entry name" value="HD/PDEase_dom"/>
</dbReference>
<dbReference type="InterPro" id="IPR006674">
    <property type="entry name" value="HD_domain"/>
</dbReference>
<dbReference type="InterPro" id="IPR043519">
    <property type="entry name" value="NT_sf"/>
</dbReference>
<dbReference type="InterPro" id="IPR002646">
    <property type="entry name" value="PolA_pol_head_dom"/>
</dbReference>
<dbReference type="InterPro" id="IPR032828">
    <property type="entry name" value="PolyA_RNA-bd"/>
</dbReference>
<dbReference type="InterPro" id="IPR050124">
    <property type="entry name" value="tRNA_CCA-adding_enzyme"/>
</dbReference>
<dbReference type="NCBIfam" id="NF008137">
    <property type="entry name" value="PRK10885.1"/>
    <property type="match status" value="1"/>
</dbReference>
<dbReference type="PANTHER" id="PTHR47545">
    <property type="entry name" value="MULTIFUNCTIONAL CCA PROTEIN"/>
    <property type="match status" value="1"/>
</dbReference>
<dbReference type="PANTHER" id="PTHR47545:SF1">
    <property type="entry name" value="MULTIFUNCTIONAL CCA PROTEIN"/>
    <property type="match status" value="1"/>
</dbReference>
<dbReference type="Pfam" id="PF01966">
    <property type="entry name" value="HD"/>
    <property type="match status" value="1"/>
</dbReference>
<dbReference type="Pfam" id="PF01743">
    <property type="entry name" value="PolyA_pol"/>
    <property type="match status" value="1"/>
</dbReference>
<dbReference type="Pfam" id="PF12627">
    <property type="entry name" value="PolyA_pol_RNAbd"/>
    <property type="match status" value="1"/>
</dbReference>
<dbReference type="PIRSF" id="PIRSF000813">
    <property type="entry name" value="CCA_bact"/>
    <property type="match status" value="1"/>
</dbReference>
<dbReference type="SUPFAM" id="SSF81301">
    <property type="entry name" value="Nucleotidyltransferase"/>
    <property type="match status" value="1"/>
</dbReference>
<dbReference type="SUPFAM" id="SSF81891">
    <property type="entry name" value="Poly A polymerase C-terminal region-like"/>
    <property type="match status" value="1"/>
</dbReference>
<dbReference type="PROSITE" id="PS51831">
    <property type="entry name" value="HD"/>
    <property type="match status" value="1"/>
</dbReference>
<sequence>MQVYLVGGAVRDYLLGHPYQEKDYVVVGATPEHMLAQGFQPVGKDFPVFLHPETKEEYALARTERKSGQGYHGFQFFTDTTVSLEDDLIRRDLTINAIAMDQDGKIYDPYGGQNDLENKILRHVSEAFAEDPLRVLRVARFAARYFPYGFQIAPETLQLMQTMADSGELDALTPERVWKETSRALMENHADIYFQTLRDCGALKHLFPEIDALFGVPQRPEYHPEVDCGIHTLMSLQQACKSNYSLDVRFAVLVHDLGKALTPAEELPRHIMHEERGIKPVTQLCERLRVPTQTKQLALSVCKEHLKCHQIMSLKPGTLWRLLQRLDVLRRPERVEAFVQACECDAKGRLGLEDRPYPQAQYMREAMQIVRSIKVQDLPENIKGAEIGEMLIQYRIEALAEFKNQHQSLSHS</sequence>
<evidence type="ECO:0000255" key="1">
    <source>
        <dbReference type="HAMAP-Rule" id="MF_01261"/>
    </source>
</evidence>
<proteinExistence type="inferred from homology"/>
<reference key="1">
    <citation type="journal article" date="2008" name="J. Bacteriol.">
        <title>Comparative genome sequence analysis of multidrug-resistant Acinetobacter baumannii.</title>
        <authorList>
            <person name="Adams M.D."/>
            <person name="Goglin K."/>
            <person name="Molyneaux N."/>
            <person name="Hujer K.M."/>
            <person name="Lavender H."/>
            <person name="Jamison J.J."/>
            <person name="MacDonald I.J."/>
            <person name="Martin K.M."/>
            <person name="Russo T."/>
            <person name="Campagnari A.A."/>
            <person name="Hujer A.M."/>
            <person name="Bonomo R.A."/>
            <person name="Gill S.R."/>
        </authorList>
    </citation>
    <scope>NUCLEOTIDE SEQUENCE [LARGE SCALE GENOMIC DNA]</scope>
    <source>
        <strain>AB307-0294</strain>
    </source>
</reference>
<gene>
    <name evidence="1" type="primary">cca</name>
    <name type="ordered locus">ABBFA_001102</name>
</gene>
<organism>
    <name type="scientific">Acinetobacter baumannii (strain AB307-0294)</name>
    <dbReference type="NCBI Taxonomy" id="557600"/>
    <lineage>
        <taxon>Bacteria</taxon>
        <taxon>Pseudomonadati</taxon>
        <taxon>Pseudomonadota</taxon>
        <taxon>Gammaproteobacteria</taxon>
        <taxon>Moraxellales</taxon>
        <taxon>Moraxellaceae</taxon>
        <taxon>Acinetobacter</taxon>
        <taxon>Acinetobacter calcoaceticus/baumannii complex</taxon>
    </lineage>
</organism>
<name>CCA_ACIB3</name>